<proteinExistence type="evidence at transcript level"/>
<protein>
    <recommendedName>
        <fullName>High mobility group-T protein</fullName>
        <shortName>HMG-T</shortName>
    </recommendedName>
    <alternativeName>
        <fullName>HMG-T1</fullName>
        <shortName>HMG-1</shortName>
    </alternativeName>
</protein>
<dbReference type="EMBL" id="X02666">
    <property type="protein sequence ID" value="CAA26500.1"/>
    <property type="molecule type" value="mRNA"/>
</dbReference>
<dbReference type="EMBL" id="L32859">
    <property type="protein sequence ID" value="AAA58771.1"/>
    <property type="molecule type" value="Genomic_DNA"/>
</dbReference>
<dbReference type="PIR" id="A24019">
    <property type="entry name" value="A24019"/>
</dbReference>
<dbReference type="PIR" id="T01071">
    <property type="entry name" value="T01071"/>
</dbReference>
<dbReference type="RefSeq" id="NP_001118186.1">
    <property type="nucleotide sequence ID" value="NM_001124714.1"/>
</dbReference>
<dbReference type="SMR" id="P07746"/>
<dbReference type="GeneID" id="100136765"/>
<dbReference type="KEGG" id="omy:100136765"/>
<dbReference type="CTD" id="321622"/>
<dbReference type="OrthoDB" id="1919336at2759"/>
<dbReference type="Proteomes" id="UP000694395">
    <property type="component" value="Unplaced"/>
</dbReference>
<dbReference type="GO" id="GO:0000785">
    <property type="term" value="C:chromatin"/>
    <property type="evidence" value="ECO:0000314"/>
    <property type="project" value="CAFA"/>
</dbReference>
<dbReference type="GO" id="GO:0005634">
    <property type="term" value="C:nucleus"/>
    <property type="evidence" value="ECO:0007669"/>
    <property type="project" value="UniProtKB-SubCell"/>
</dbReference>
<dbReference type="GO" id="GO:0003690">
    <property type="term" value="F:double-stranded DNA binding"/>
    <property type="evidence" value="ECO:0000314"/>
    <property type="project" value="CAFA"/>
</dbReference>
<dbReference type="GO" id="GO:0006357">
    <property type="term" value="P:regulation of transcription by RNA polymerase II"/>
    <property type="evidence" value="ECO:0007669"/>
    <property type="project" value="TreeGrafter"/>
</dbReference>
<dbReference type="CDD" id="cd21978">
    <property type="entry name" value="HMG-box_HMGB_rpt1"/>
    <property type="match status" value="1"/>
</dbReference>
<dbReference type="CDD" id="cd21979">
    <property type="entry name" value="HMG-box_HMGB_rpt2"/>
    <property type="match status" value="1"/>
</dbReference>
<dbReference type="FunFam" id="1.10.30.10:FF:000006">
    <property type="entry name" value="High mobility group protein B1"/>
    <property type="match status" value="1"/>
</dbReference>
<dbReference type="FunFam" id="1.10.30.10:FF:000015">
    <property type="entry name" value="high mobility group protein B1"/>
    <property type="match status" value="1"/>
</dbReference>
<dbReference type="Gene3D" id="1.10.30.10">
    <property type="entry name" value="High mobility group box domain"/>
    <property type="match status" value="2"/>
</dbReference>
<dbReference type="InterPro" id="IPR009071">
    <property type="entry name" value="HMG_box_dom"/>
</dbReference>
<dbReference type="InterPro" id="IPR036910">
    <property type="entry name" value="HMG_box_dom_sf"/>
</dbReference>
<dbReference type="InterPro" id="IPR017967">
    <property type="entry name" value="HMG_boxA_CS"/>
</dbReference>
<dbReference type="InterPro" id="IPR050342">
    <property type="entry name" value="HMGB"/>
</dbReference>
<dbReference type="PANTHER" id="PTHR48112:SF12">
    <property type="entry name" value="HIGH MOBILITY GROUP PROTEIN B1-LIKE 1-RELATED"/>
    <property type="match status" value="1"/>
</dbReference>
<dbReference type="PANTHER" id="PTHR48112">
    <property type="entry name" value="HIGH MOBILITY GROUP PROTEIN DSP1"/>
    <property type="match status" value="1"/>
</dbReference>
<dbReference type="Pfam" id="PF00505">
    <property type="entry name" value="HMG_box"/>
    <property type="match status" value="1"/>
</dbReference>
<dbReference type="Pfam" id="PF09011">
    <property type="entry name" value="HMG_box_2"/>
    <property type="match status" value="1"/>
</dbReference>
<dbReference type="PRINTS" id="PR00886">
    <property type="entry name" value="HIGHMOBLTY12"/>
</dbReference>
<dbReference type="SMART" id="SM00398">
    <property type="entry name" value="HMG"/>
    <property type="match status" value="2"/>
</dbReference>
<dbReference type="SUPFAM" id="SSF47095">
    <property type="entry name" value="HMG-box"/>
    <property type="match status" value="2"/>
</dbReference>
<dbReference type="PROSITE" id="PS00353">
    <property type="entry name" value="HMG_BOX_1"/>
    <property type="match status" value="1"/>
</dbReference>
<dbReference type="PROSITE" id="PS50118">
    <property type="entry name" value="HMG_BOX_2"/>
    <property type="match status" value="2"/>
</dbReference>
<sequence length="204" mass="23572">MGKDPRKPRGKMSSYAYFVQTRREEHKKKHPEASVNFSEFSKKCSERWKTMSAKEKGKFEDLAKLDKVRYEREMRSYIPPKGEKKKRFKDPNAPKRPSSAFFIFCADFRPQVKGETPGLSIGDVAKKLGEKWNNLTAEDKVPYEKKASRLKEKYEKDITAYRNKGKVPVSMPAKAAAPAKDDDDDDDDDDDDEDDDDDDDEDDE</sequence>
<reference key="1">
    <citation type="journal article" date="1985" name="Nucleic Acids Res.">
        <title>Isolation and sequence of cDNA clones coding for a member of the family of high mobility group proteins (HMG-T) in trout and analysis of HMG-T-mRNA's in trout tissues.</title>
        <authorList>
            <person name="Pentecost B.T."/>
            <person name="Wright J.M."/>
            <person name="Dixon G.H."/>
        </authorList>
    </citation>
    <scope>NUCLEOTIDE SEQUENCE [MRNA]</scope>
</reference>
<reference key="2">
    <citation type="submission" date="1986-05" db="EMBL/GenBank/DDBJ databases">
        <authorList>
            <person name="Wright J."/>
        </authorList>
    </citation>
    <scope>SEQUENCE REVISION</scope>
</reference>
<reference key="3">
    <citation type="journal article" date="1994" name="Eur. J. Biochem.">
        <title>cDNA sequence and structure of a gene encoding trout testis high-mobility-group-1 protein.</title>
        <authorList>
            <person name="Stros M."/>
            <person name="Nishikawa S."/>
            <person name="Dixon G.H."/>
        </authorList>
    </citation>
    <scope>NUCLEOTIDE SEQUENCE [GENOMIC DNA]</scope>
    <source>
        <tissue>Testis</tissue>
    </source>
</reference>
<comment type="function">
    <text>Binds preferentially single-stranded DNA and unwinds double-stranded DNA.</text>
</comment>
<comment type="subcellular location">
    <subcellularLocation>
        <location>Nucleus</location>
    </subcellularLocation>
    <subcellularLocation>
        <location>Chromosome</location>
    </subcellularLocation>
</comment>
<comment type="similarity">
    <text evidence="3">Belongs to the HMGB family.</text>
</comment>
<keyword id="KW-0158">Chromosome</keyword>
<keyword id="KW-0238">DNA-binding</keyword>
<keyword id="KW-0539">Nucleus</keyword>
<keyword id="KW-0677">Repeat</keyword>
<feature type="chain" id="PRO_0000048544" description="High mobility group-T protein">
    <location>
        <begin position="1"/>
        <end position="204"/>
    </location>
</feature>
<feature type="DNA-binding region" description="HMG box 1" evidence="1">
    <location>
        <begin position="8"/>
        <end position="78"/>
    </location>
</feature>
<feature type="DNA-binding region" description="HMG box 2" evidence="1">
    <location>
        <begin position="94"/>
        <end position="162"/>
    </location>
</feature>
<feature type="region of interest" description="Disordered" evidence="2">
    <location>
        <begin position="162"/>
        <end position="204"/>
    </location>
</feature>
<feature type="compositionally biased region" description="Acidic residues" evidence="2">
    <location>
        <begin position="181"/>
        <end position="204"/>
    </location>
</feature>
<feature type="sequence conflict" description="In Ref. 3; AAA58771." evidence="3" ref="3">
    <original>R</original>
    <variation>C</variation>
    <location>
        <position position="22"/>
    </location>
</feature>
<feature type="sequence conflict" description="In Ref. 3; AAA58771." evidence="3" ref="3">
    <original>R</original>
    <variation>K</variation>
    <location>
        <position position="149"/>
    </location>
</feature>
<accession>P07746</accession>
<accession>Q91200</accession>
<evidence type="ECO:0000255" key="1">
    <source>
        <dbReference type="PROSITE-ProRule" id="PRU00267"/>
    </source>
</evidence>
<evidence type="ECO:0000256" key="2">
    <source>
        <dbReference type="SAM" id="MobiDB-lite"/>
    </source>
</evidence>
<evidence type="ECO:0000305" key="3"/>
<organism>
    <name type="scientific">Oncorhynchus mykiss</name>
    <name type="common">Rainbow trout</name>
    <name type="synonym">Salmo gairdneri</name>
    <dbReference type="NCBI Taxonomy" id="8022"/>
    <lineage>
        <taxon>Eukaryota</taxon>
        <taxon>Metazoa</taxon>
        <taxon>Chordata</taxon>
        <taxon>Craniata</taxon>
        <taxon>Vertebrata</taxon>
        <taxon>Euteleostomi</taxon>
        <taxon>Actinopterygii</taxon>
        <taxon>Neopterygii</taxon>
        <taxon>Teleostei</taxon>
        <taxon>Protacanthopterygii</taxon>
        <taxon>Salmoniformes</taxon>
        <taxon>Salmonidae</taxon>
        <taxon>Salmoninae</taxon>
        <taxon>Oncorhynchus</taxon>
    </lineage>
</organism>
<name>HMGT_ONCMY</name>